<evidence type="ECO:0000250" key="1"/>
<evidence type="ECO:0000255" key="2"/>
<evidence type="ECO:0000305" key="3"/>
<geneLocation type="chloroplast"/>
<gene>
    <name type="primary">ndhF</name>
</gene>
<name>NU5C_NICTO</name>
<reference key="1">
    <citation type="journal article" date="2006" name="Mol. Genet. Genomics">
        <title>The chloroplast genome of Nicotiana sylvestris and Nicotiana tomentosiformis: complete sequencing confirms that the Nicotiana sylvestris progenitor is the maternal genome donor of Nicotiana tabacum.</title>
        <authorList>
            <person name="Yukawa M."/>
            <person name="Tsudzuki T."/>
            <person name="Sugiura M."/>
        </authorList>
    </citation>
    <scope>NUCLEOTIDE SEQUENCE [LARGE SCALE GENOMIC DNA]</scope>
</reference>
<accession>Q33BX5</accession>
<comment type="function">
    <text evidence="1">NDH shuttles electrons from NAD(P)H:plastoquinone, via FMN and iron-sulfur (Fe-S) centers, to quinones in the photosynthetic chain and possibly in a chloroplast respiratory chain. The immediate electron acceptor for the enzyme in this species is believed to be plastoquinone. Couples the redox reaction to proton translocation, and thus conserves the redox energy in a proton gradient (By similarity).</text>
</comment>
<comment type="catalytic activity">
    <reaction>
        <text>a plastoquinone + NADH + (n+1) H(+)(in) = a plastoquinol + NAD(+) + n H(+)(out)</text>
        <dbReference type="Rhea" id="RHEA:42608"/>
        <dbReference type="Rhea" id="RHEA-COMP:9561"/>
        <dbReference type="Rhea" id="RHEA-COMP:9562"/>
        <dbReference type="ChEBI" id="CHEBI:15378"/>
        <dbReference type="ChEBI" id="CHEBI:17757"/>
        <dbReference type="ChEBI" id="CHEBI:57540"/>
        <dbReference type="ChEBI" id="CHEBI:57945"/>
        <dbReference type="ChEBI" id="CHEBI:62192"/>
    </reaction>
</comment>
<comment type="catalytic activity">
    <reaction>
        <text>a plastoquinone + NADPH + (n+1) H(+)(in) = a plastoquinol + NADP(+) + n H(+)(out)</text>
        <dbReference type="Rhea" id="RHEA:42612"/>
        <dbReference type="Rhea" id="RHEA-COMP:9561"/>
        <dbReference type="Rhea" id="RHEA-COMP:9562"/>
        <dbReference type="ChEBI" id="CHEBI:15378"/>
        <dbReference type="ChEBI" id="CHEBI:17757"/>
        <dbReference type="ChEBI" id="CHEBI:57783"/>
        <dbReference type="ChEBI" id="CHEBI:58349"/>
        <dbReference type="ChEBI" id="CHEBI:62192"/>
    </reaction>
</comment>
<comment type="subunit">
    <text evidence="1">NDH is composed of at least 16 different subunits, 5 of which are encoded in the nucleus.</text>
</comment>
<comment type="subcellular location">
    <subcellularLocation>
        <location evidence="1">Plastid</location>
        <location evidence="1">Chloroplast thylakoid membrane</location>
        <topology evidence="1">Multi-pass membrane protein</topology>
    </subcellularLocation>
</comment>
<comment type="similarity">
    <text evidence="3">Belongs to the complex I subunit 5 family.</text>
</comment>
<keyword id="KW-0150">Chloroplast</keyword>
<keyword id="KW-0472">Membrane</keyword>
<keyword id="KW-0520">NAD</keyword>
<keyword id="KW-0521">NADP</keyword>
<keyword id="KW-0934">Plastid</keyword>
<keyword id="KW-0618">Plastoquinone</keyword>
<keyword id="KW-0874">Quinone</keyword>
<keyword id="KW-0793">Thylakoid</keyword>
<keyword id="KW-1278">Translocase</keyword>
<keyword id="KW-0812">Transmembrane</keyword>
<keyword id="KW-1133">Transmembrane helix</keyword>
<keyword id="KW-0813">Transport</keyword>
<feature type="chain" id="PRO_0000360954" description="NAD(P)H-quinone oxidoreductase subunit 5, chloroplastic">
    <location>
        <begin position="1"/>
        <end position="740"/>
    </location>
</feature>
<feature type="transmembrane region" description="Helical" evidence="2">
    <location>
        <begin position="9"/>
        <end position="29"/>
    </location>
</feature>
<feature type="transmembrane region" description="Helical" evidence="2">
    <location>
        <begin position="40"/>
        <end position="60"/>
    </location>
</feature>
<feature type="transmembrane region" description="Helical" evidence="2">
    <location>
        <begin position="89"/>
        <end position="109"/>
    </location>
</feature>
<feature type="transmembrane region" description="Helical" evidence="2">
    <location>
        <begin position="125"/>
        <end position="145"/>
    </location>
</feature>
<feature type="transmembrane region" description="Helical" evidence="2">
    <location>
        <begin position="147"/>
        <end position="167"/>
    </location>
</feature>
<feature type="transmembrane region" description="Helical" evidence="2">
    <location>
        <begin position="185"/>
        <end position="205"/>
    </location>
</feature>
<feature type="transmembrane region" description="Helical" evidence="2">
    <location>
        <begin position="219"/>
        <end position="239"/>
    </location>
</feature>
<feature type="transmembrane region" description="Helical" evidence="2">
    <location>
        <begin position="258"/>
        <end position="278"/>
    </location>
</feature>
<feature type="transmembrane region" description="Helical" evidence="2">
    <location>
        <begin position="286"/>
        <end position="306"/>
    </location>
</feature>
<feature type="transmembrane region" description="Helical" evidence="2">
    <location>
        <begin position="327"/>
        <end position="347"/>
    </location>
</feature>
<feature type="transmembrane region" description="Helical" evidence="2">
    <location>
        <begin position="354"/>
        <end position="374"/>
    </location>
</feature>
<feature type="transmembrane region" description="Helical" evidence="2">
    <location>
        <begin position="396"/>
        <end position="416"/>
    </location>
</feature>
<feature type="transmembrane region" description="Helical" evidence="2">
    <location>
        <begin position="425"/>
        <end position="445"/>
    </location>
</feature>
<feature type="transmembrane region" description="Helical" evidence="2">
    <location>
        <begin position="543"/>
        <end position="563"/>
    </location>
</feature>
<feature type="transmembrane region" description="Helical" evidence="2">
    <location>
        <begin position="602"/>
        <end position="622"/>
    </location>
</feature>
<feature type="transmembrane region" description="Helical" evidence="2">
    <location>
        <begin position="717"/>
        <end position="737"/>
    </location>
</feature>
<dbReference type="EC" id="7.1.1.-"/>
<dbReference type="EMBL" id="AB240139">
    <property type="protein sequence ID" value="BAE48060.1"/>
    <property type="molecule type" value="Genomic_DNA"/>
</dbReference>
<dbReference type="RefSeq" id="YP_398920.1">
    <property type="nucleotide sequence ID" value="NC_007602.1"/>
</dbReference>
<dbReference type="SMR" id="Q33BX5"/>
<dbReference type="GeneID" id="3776352"/>
<dbReference type="KEGG" id="nto:3776352"/>
<dbReference type="OrthoDB" id="543408at2759"/>
<dbReference type="GO" id="GO:0009535">
    <property type="term" value="C:chloroplast thylakoid membrane"/>
    <property type="evidence" value="ECO:0007669"/>
    <property type="project" value="UniProtKB-SubCell"/>
</dbReference>
<dbReference type="GO" id="GO:0008137">
    <property type="term" value="F:NADH dehydrogenase (ubiquinone) activity"/>
    <property type="evidence" value="ECO:0007669"/>
    <property type="project" value="InterPro"/>
</dbReference>
<dbReference type="GO" id="GO:0048038">
    <property type="term" value="F:quinone binding"/>
    <property type="evidence" value="ECO:0007669"/>
    <property type="project" value="UniProtKB-KW"/>
</dbReference>
<dbReference type="GO" id="GO:0042773">
    <property type="term" value="P:ATP synthesis coupled electron transport"/>
    <property type="evidence" value="ECO:0007669"/>
    <property type="project" value="InterPro"/>
</dbReference>
<dbReference type="GO" id="GO:0015990">
    <property type="term" value="P:electron transport coupled proton transport"/>
    <property type="evidence" value="ECO:0007669"/>
    <property type="project" value="TreeGrafter"/>
</dbReference>
<dbReference type="Gene3D" id="1.20.5.2700">
    <property type="match status" value="1"/>
</dbReference>
<dbReference type="InterPro" id="IPR002128">
    <property type="entry name" value="NADH_UbQ_OxRdtase_chlpt_su5_C"/>
</dbReference>
<dbReference type="InterPro" id="IPR018393">
    <property type="entry name" value="NADHpl_OxRdtase_5_subgr"/>
</dbReference>
<dbReference type="InterPro" id="IPR001750">
    <property type="entry name" value="ND/Mrp_TM"/>
</dbReference>
<dbReference type="InterPro" id="IPR003945">
    <property type="entry name" value="NU5C-like"/>
</dbReference>
<dbReference type="InterPro" id="IPR001516">
    <property type="entry name" value="Proton_antipo_N"/>
</dbReference>
<dbReference type="NCBIfam" id="TIGR01974">
    <property type="entry name" value="NDH_I_L"/>
    <property type="match status" value="1"/>
</dbReference>
<dbReference type="NCBIfam" id="NF005141">
    <property type="entry name" value="PRK06590.1"/>
    <property type="match status" value="1"/>
</dbReference>
<dbReference type="PANTHER" id="PTHR42829">
    <property type="entry name" value="NADH-UBIQUINONE OXIDOREDUCTASE CHAIN 5"/>
    <property type="match status" value="1"/>
</dbReference>
<dbReference type="PANTHER" id="PTHR42829:SF2">
    <property type="entry name" value="NADH-UBIQUINONE OXIDOREDUCTASE CHAIN 5"/>
    <property type="match status" value="1"/>
</dbReference>
<dbReference type="Pfam" id="PF01010">
    <property type="entry name" value="Proton_antipo_C"/>
    <property type="match status" value="1"/>
</dbReference>
<dbReference type="Pfam" id="PF00361">
    <property type="entry name" value="Proton_antipo_M"/>
    <property type="match status" value="1"/>
</dbReference>
<dbReference type="Pfam" id="PF00662">
    <property type="entry name" value="Proton_antipo_N"/>
    <property type="match status" value="1"/>
</dbReference>
<dbReference type="PRINTS" id="PR01434">
    <property type="entry name" value="NADHDHGNASE5"/>
</dbReference>
<dbReference type="PRINTS" id="PR01435">
    <property type="entry name" value="NPOXDRDTASE5"/>
</dbReference>
<protein>
    <recommendedName>
        <fullName>NAD(P)H-quinone oxidoreductase subunit 5, chloroplastic</fullName>
        <ecNumber>7.1.1.-</ecNumber>
    </recommendedName>
    <alternativeName>
        <fullName>NAD(P)H dehydrogenase subunit 5</fullName>
    </alternativeName>
    <alternativeName>
        <fullName>NADH-plastoquinone oxidoreductase subunit 5</fullName>
    </alternativeName>
</protein>
<proteinExistence type="inferred from homology"/>
<sequence length="740" mass="83935">MEQTYEYAWIIPFIPLPVPMLIGAGLILFPTATKSFRRMWAFQSVLLLSIVMVFSIYLSIQQINSRSFYQYVWSWIINNDFSLEFGYLIDPLTSIMSILITTVGIMVLIYSDNYMAHDQGYLRFFAYMSFFSTSMLGLVTSSNLIQIYIFWELVGLCSYLLIGFWFTRPVAANACQKAFVTNRVGDFGLLLGILGFYWITGSFEFRNFFEIFNNLIYNNEVDFLFVTLCAVLLFAGAVAKSAQFPLHVWLPDAMEGPTPISALIHAATMVAAGIFLVARLLPLFRVIPYIMYLISVIGIITVLLGATLALAQKDIKRGLAYSTMSQLGYMMLALGMGSYRSALFHLITHAYSKALLFLGSGSIIHSMETIVGYSPAKSQNMGLMGGLRKHVPITKITFLLGTLSLCGIPPLACFWSKDEILNDSWLYSPIFAIIAWATAGLTAFYMFRIYLLTFEGHLNVHFKNYGGKQKTPFYSISLWGKNGVKKNSCLLTMNNNESTYFFSKTKYPLDKNGRKMTRPFMTIAHFEHKAVYSYPYESDNTMLFPIFVLGLFTLFVGSLGIPFNQEGGNLDILSKWLAPSINLLHQKSNNSMDWNEFLKDAVLSVSIAYFGIFIASFLYKPIYSSLKNFELINSFVKKGPKRILWDKIINGIYDWSYNRAYIDAFYTRFLVGGIRGLAEFTHFFDRRVIDGMTNGVGVISFIVGEGIKYIGGGRISSYLFLYLAYVLVFLLVYYLLFSTF</sequence>
<organism>
    <name type="scientific">Nicotiana tomentosiformis</name>
    <name type="common">Tobacco</name>
    <dbReference type="NCBI Taxonomy" id="4098"/>
    <lineage>
        <taxon>Eukaryota</taxon>
        <taxon>Viridiplantae</taxon>
        <taxon>Streptophyta</taxon>
        <taxon>Embryophyta</taxon>
        <taxon>Tracheophyta</taxon>
        <taxon>Spermatophyta</taxon>
        <taxon>Magnoliopsida</taxon>
        <taxon>eudicotyledons</taxon>
        <taxon>Gunneridae</taxon>
        <taxon>Pentapetalae</taxon>
        <taxon>asterids</taxon>
        <taxon>lamiids</taxon>
        <taxon>Solanales</taxon>
        <taxon>Solanaceae</taxon>
        <taxon>Nicotianoideae</taxon>
        <taxon>Nicotianeae</taxon>
        <taxon>Nicotiana</taxon>
    </lineage>
</organism>